<dbReference type="EMBL" id="CP001131">
    <property type="protein sequence ID" value="ACG73892.1"/>
    <property type="molecule type" value="Genomic_DNA"/>
</dbReference>
<dbReference type="RefSeq" id="WP_012526673.1">
    <property type="nucleotide sequence ID" value="NC_011145.1"/>
</dbReference>
<dbReference type="SMR" id="B4UH38"/>
<dbReference type="KEGG" id="ank:AnaeK_2667"/>
<dbReference type="HOGENOM" id="CLU_022916_0_0_7"/>
<dbReference type="OrthoDB" id="9801639at2"/>
<dbReference type="Proteomes" id="UP000001871">
    <property type="component" value="Chromosome"/>
</dbReference>
<dbReference type="GO" id="GO:0005524">
    <property type="term" value="F:ATP binding"/>
    <property type="evidence" value="ECO:0007669"/>
    <property type="project" value="UniProtKB-UniRule"/>
</dbReference>
<dbReference type="GO" id="GO:0046933">
    <property type="term" value="F:proton-transporting ATP synthase activity, rotational mechanism"/>
    <property type="evidence" value="ECO:0007669"/>
    <property type="project" value="UniProtKB-UniRule"/>
</dbReference>
<dbReference type="GO" id="GO:0042777">
    <property type="term" value="P:proton motive force-driven plasma membrane ATP synthesis"/>
    <property type="evidence" value="ECO:0007669"/>
    <property type="project" value="UniProtKB-UniRule"/>
</dbReference>
<dbReference type="CDD" id="cd18112">
    <property type="entry name" value="ATP-synt_V_A-type_beta_C"/>
    <property type="match status" value="1"/>
</dbReference>
<dbReference type="CDD" id="cd18118">
    <property type="entry name" value="ATP-synt_V_A-type_beta_N"/>
    <property type="match status" value="1"/>
</dbReference>
<dbReference type="CDD" id="cd01135">
    <property type="entry name" value="V_A-ATPase_B"/>
    <property type="match status" value="1"/>
</dbReference>
<dbReference type="Gene3D" id="3.40.50.12240">
    <property type="match status" value="1"/>
</dbReference>
<dbReference type="HAMAP" id="MF_00310">
    <property type="entry name" value="ATP_synth_B_arch"/>
    <property type="match status" value="1"/>
</dbReference>
<dbReference type="InterPro" id="IPR055190">
    <property type="entry name" value="ATP-synt_VA_C"/>
</dbReference>
<dbReference type="InterPro" id="IPR020003">
    <property type="entry name" value="ATPase_a/bsu_AS"/>
</dbReference>
<dbReference type="InterPro" id="IPR004100">
    <property type="entry name" value="ATPase_F1/V1/A1_a/bsu_N"/>
</dbReference>
<dbReference type="InterPro" id="IPR000194">
    <property type="entry name" value="ATPase_F1/V1/A1_a/bsu_nucl-bd"/>
</dbReference>
<dbReference type="InterPro" id="IPR027417">
    <property type="entry name" value="P-loop_NTPase"/>
</dbReference>
<dbReference type="InterPro" id="IPR022879">
    <property type="entry name" value="V-ATPase_su_B/beta"/>
</dbReference>
<dbReference type="NCBIfam" id="NF003235">
    <property type="entry name" value="PRK04196.1"/>
    <property type="match status" value="1"/>
</dbReference>
<dbReference type="PANTHER" id="PTHR43389">
    <property type="entry name" value="V-TYPE PROTON ATPASE SUBUNIT B"/>
    <property type="match status" value="1"/>
</dbReference>
<dbReference type="PANTHER" id="PTHR43389:SF4">
    <property type="entry name" value="V-TYPE PROTON ATPASE SUBUNIT B"/>
    <property type="match status" value="1"/>
</dbReference>
<dbReference type="Pfam" id="PF00006">
    <property type="entry name" value="ATP-synt_ab"/>
    <property type="match status" value="1"/>
</dbReference>
<dbReference type="Pfam" id="PF02874">
    <property type="entry name" value="ATP-synt_ab_N"/>
    <property type="match status" value="1"/>
</dbReference>
<dbReference type="Pfam" id="PF22919">
    <property type="entry name" value="ATP-synt_VA_C"/>
    <property type="match status" value="1"/>
</dbReference>
<dbReference type="SUPFAM" id="SSF47917">
    <property type="entry name" value="C-terminal domain of alpha and beta subunits of F1 ATP synthase"/>
    <property type="match status" value="1"/>
</dbReference>
<dbReference type="SUPFAM" id="SSF52540">
    <property type="entry name" value="P-loop containing nucleoside triphosphate hydrolases"/>
    <property type="match status" value="1"/>
</dbReference>
<dbReference type="PROSITE" id="PS00152">
    <property type="entry name" value="ATPASE_ALPHA_BETA"/>
    <property type="match status" value="1"/>
</dbReference>
<name>VATB_ANASK</name>
<feature type="chain" id="PRO_1000115650" description="V-type ATP synthase beta chain">
    <location>
        <begin position="1"/>
        <end position="477"/>
    </location>
</feature>
<organism>
    <name type="scientific">Anaeromyxobacter sp. (strain K)</name>
    <dbReference type="NCBI Taxonomy" id="447217"/>
    <lineage>
        <taxon>Bacteria</taxon>
        <taxon>Pseudomonadati</taxon>
        <taxon>Myxococcota</taxon>
        <taxon>Myxococcia</taxon>
        <taxon>Myxococcales</taxon>
        <taxon>Cystobacterineae</taxon>
        <taxon>Anaeromyxobacteraceae</taxon>
        <taxon>Anaeromyxobacter</taxon>
    </lineage>
</organism>
<comment type="function">
    <text evidence="1">Produces ATP from ADP in the presence of a proton gradient across the membrane. The V-type beta chain is a regulatory subunit.</text>
</comment>
<comment type="similarity">
    <text evidence="1">Belongs to the ATPase alpha/beta chains family.</text>
</comment>
<proteinExistence type="inferred from homology"/>
<accession>B4UH38</accession>
<protein>
    <recommendedName>
        <fullName evidence="1">V-type ATP synthase beta chain</fullName>
    </recommendedName>
    <alternativeName>
        <fullName evidence="1">V-ATPase subunit B</fullName>
    </alternativeName>
</protein>
<reference key="1">
    <citation type="submission" date="2008-08" db="EMBL/GenBank/DDBJ databases">
        <title>Complete sequence of Anaeromyxobacter sp. K.</title>
        <authorList>
            <consortium name="US DOE Joint Genome Institute"/>
            <person name="Lucas S."/>
            <person name="Copeland A."/>
            <person name="Lapidus A."/>
            <person name="Glavina del Rio T."/>
            <person name="Dalin E."/>
            <person name="Tice H."/>
            <person name="Bruce D."/>
            <person name="Goodwin L."/>
            <person name="Pitluck S."/>
            <person name="Saunders E."/>
            <person name="Brettin T."/>
            <person name="Detter J.C."/>
            <person name="Han C."/>
            <person name="Larimer F."/>
            <person name="Land M."/>
            <person name="Hauser L."/>
            <person name="Kyrpides N."/>
            <person name="Ovchinnikiva G."/>
            <person name="Beliaev A."/>
        </authorList>
    </citation>
    <scope>NUCLEOTIDE SEQUENCE [LARGE SCALE GENOMIC DNA]</scope>
    <source>
        <strain>K</strain>
    </source>
</reference>
<keyword id="KW-0066">ATP synthesis</keyword>
<keyword id="KW-0375">Hydrogen ion transport</keyword>
<keyword id="KW-0406">Ion transport</keyword>
<keyword id="KW-0813">Transport</keyword>
<evidence type="ECO:0000255" key="1">
    <source>
        <dbReference type="HAMAP-Rule" id="MF_00310"/>
    </source>
</evidence>
<gene>
    <name evidence="1" type="primary">atpB</name>
    <name type="ordered locus">AnaeK_2667</name>
</gene>
<sequence length="477" mass="51287">MDLVTRRIRGALGIAGPLLFLEGVPRARLGEVVRIRGEPEAHGRAAEERSGQVIALSRDRIAVQVLEETRGLAPARAEVTLTGQVARLGVSRGMLGRVLDGLGRPADGLPPPVPEARPAIHGAALNVTRREKPSDFIETGVSAIDGMNTLVRGQKLPVFSCAGLPASRLAAQIVCQARVRGGEPFAVVFAAMGSPFREYHAFLDAFRAAGVLDRTVVFLNRAEDPPIERLMTPRCALTCAEHLAFAHGLHVLVVLTDVTSYCEALREVALAREEVPGRRGYPGYMYTDLATIFERAGRVRGRPGSLTQLPVLTMPDDDLTHPIPDLTGYITEGQIVLSRDLDRRGVYPPIDVLPSLSRLMGLGAGPGKTRDDHRPVADQLYAFYARGRDVRRMAAIVGAANLGEEEKRLLAFADAFEDELVGQGGTFRTIEDTLEAGWRLLSGFPPAALTRIPERLLRARPARPAAGAAALSGGAVA</sequence>